<feature type="chain" id="PRO_0000240392" description="Golgi apparatus membrane protein TVP15">
    <location>
        <begin position="1"/>
        <end position="143"/>
    </location>
</feature>
<feature type="topological domain" description="Cytoplasmic" evidence="1">
    <location>
        <begin position="1"/>
        <end position="10"/>
    </location>
</feature>
<feature type="transmembrane region" description="Helical" evidence="1">
    <location>
        <begin position="11"/>
        <end position="31"/>
    </location>
</feature>
<feature type="topological domain" description="Lumenal" evidence="1">
    <location>
        <begin position="32"/>
        <end position="35"/>
    </location>
</feature>
<feature type="transmembrane region" description="Helical" evidence="1">
    <location>
        <begin position="36"/>
        <end position="56"/>
    </location>
</feature>
<feature type="topological domain" description="Cytoplasmic" evidence="1">
    <location>
        <begin position="57"/>
        <end position="67"/>
    </location>
</feature>
<feature type="transmembrane region" description="Helical" evidence="1">
    <location>
        <begin position="68"/>
        <end position="88"/>
    </location>
</feature>
<feature type="topological domain" description="Lumenal" evidence="1">
    <location>
        <position position="89"/>
    </location>
</feature>
<feature type="transmembrane region" description="Helical" evidence="1">
    <location>
        <begin position="90"/>
        <end position="110"/>
    </location>
</feature>
<feature type="topological domain" description="Cytoplasmic" evidence="1">
    <location>
        <begin position="111"/>
        <end position="143"/>
    </location>
</feature>
<comment type="function">
    <text evidence="5">Golgi membrane protein involved in vesicular trafficking.</text>
</comment>
<comment type="subunit">
    <text evidence="5">Interacts with TVP18.</text>
</comment>
<comment type="interaction">
    <interactant intactId="EBI-37537">
        <id>Q03860</id>
    </interactant>
    <interactant intactId="EBI-37537">
        <id>Q03860</id>
        <label>TVP15</label>
    </interactant>
    <organismsDiffer>false</organismsDiffer>
    <experiments>3</experiments>
</comment>
<comment type="subcellular location">
    <subcellularLocation>
        <location evidence="2 4 5">Golgi apparatus membrane</location>
        <topology evidence="2 4 5">Multi-pass membrane protein</topology>
    </subcellularLocation>
</comment>
<comment type="miscellaneous">
    <text evidence="3">Present with 4540 molecules/cell in log phase SD medium.</text>
</comment>
<comment type="similarity">
    <text evidence="6">Belongs to the TVP15 family.</text>
</comment>
<keyword id="KW-0333">Golgi apparatus</keyword>
<keyword id="KW-0472">Membrane</keyword>
<keyword id="KW-1185">Reference proteome</keyword>
<keyword id="KW-0812">Transmembrane</keyword>
<keyword id="KW-1133">Transmembrane helix</keyword>
<dbReference type="EMBL" id="Z47746">
    <property type="protein sequence ID" value="CAA87676.1"/>
    <property type="molecule type" value="Genomic_DNA"/>
</dbReference>
<dbReference type="EMBL" id="AY558572">
    <property type="protein sequence ID" value="AAS56898.1"/>
    <property type="molecule type" value="Genomic_DNA"/>
</dbReference>
<dbReference type="EMBL" id="BK006938">
    <property type="protein sequence ID" value="DAA11947.1"/>
    <property type="molecule type" value="Genomic_DNA"/>
</dbReference>
<dbReference type="PIR" id="S51251">
    <property type="entry name" value="S51251"/>
</dbReference>
<dbReference type="RefSeq" id="NP_010385.3">
    <property type="nucleotide sequence ID" value="NM_001180408.3"/>
</dbReference>
<dbReference type="SMR" id="Q03860"/>
<dbReference type="BioGRID" id="32158">
    <property type="interactions" value="120"/>
</dbReference>
<dbReference type="DIP" id="DIP-2049N"/>
<dbReference type="FunCoup" id="Q03860">
    <property type="interactions" value="93"/>
</dbReference>
<dbReference type="IntAct" id="Q03860">
    <property type="interactions" value="61"/>
</dbReference>
<dbReference type="MINT" id="Q03860"/>
<dbReference type="STRING" id="4932.YDR100W"/>
<dbReference type="iPTMnet" id="Q03860"/>
<dbReference type="PaxDb" id="4932-YDR100W"/>
<dbReference type="PeptideAtlas" id="Q03860"/>
<dbReference type="EnsemblFungi" id="YDR100W_mRNA">
    <property type="protein sequence ID" value="YDR100W"/>
    <property type="gene ID" value="YDR100W"/>
</dbReference>
<dbReference type="GeneID" id="851677"/>
<dbReference type="KEGG" id="sce:YDR100W"/>
<dbReference type="AGR" id="SGD:S000002507"/>
<dbReference type="SGD" id="S000002507">
    <property type="gene designation" value="TVP15"/>
</dbReference>
<dbReference type="VEuPathDB" id="FungiDB:YDR100W"/>
<dbReference type="eggNOG" id="ENOG502S5A7">
    <property type="taxonomic scope" value="Eukaryota"/>
</dbReference>
<dbReference type="HOGENOM" id="CLU_120579_0_0_1"/>
<dbReference type="InParanoid" id="Q03860"/>
<dbReference type="OMA" id="MDYSDAF"/>
<dbReference type="OrthoDB" id="423534at2759"/>
<dbReference type="BioCyc" id="YEAST:G3O-29703-MONOMER"/>
<dbReference type="BioGRID-ORCS" id="851677">
    <property type="hits" value="1 hit in 10 CRISPR screens"/>
</dbReference>
<dbReference type="PRO" id="PR:Q03860"/>
<dbReference type="Proteomes" id="UP000002311">
    <property type="component" value="Chromosome IV"/>
</dbReference>
<dbReference type="RNAct" id="Q03860">
    <property type="molecule type" value="protein"/>
</dbReference>
<dbReference type="GO" id="GO:0000139">
    <property type="term" value="C:Golgi membrane"/>
    <property type="evidence" value="ECO:0000314"/>
    <property type="project" value="SGD"/>
</dbReference>
<dbReference type="GO" id="GO:0042802">
    <property type="term" value="F:identical protein binding"/>
    <property type="evidence" value="ECO:0000353"/>
    <property type="project" value="IntAct"/>
</dbReference>
<dbReference type="GO" id="GO:0016192">
    <property type="term" value="P:vesicle-mediated transport"/>
    <property type="evidence" value="ECO:0000316"/>
    <property type="project" value="SGD"/>
</dbReference>
<dbReference type="InterPro" id="IPR013714">
    <property type="entry name" value="Golgi_TVP15"/>
</dbReference>
<dbReference type="PANTHER" id="PTHR28128">
    <property type="entry name" value="GOLGI APPARATUS MEMBRANE PROTEIN TVP15"/>
    <property type="match status" value="1"/>
</dbReference>
<dbReference type="PANTHER" id="PTHR28128:SF1">
    <property type="entry name" value="GOLGI APPARATUS MEMBRANE PROTEIN TVP15"/>
    <property type="match status" value="1"/>
</dbReference>
<dbReference type="Pfam" id="PF08507">
    <property type="entry name" value="COPI_assoc"/>
    <property type="match status" value="1"/>
</dbReference>
<sequence>MSVIPPKFFKIANISIGCIDIIAALSQLTYIFTNLNVFLLAVYGLALSVPIVYLEFKVPSNLYRYASFYFSFLGRGLSYILLSLIISFGGIYNILAGMFTFILGVAFIVFHFSQFVEEPANFRAPGSSLSIGDDDIDDDDDMI</sequence>
<accession>Q03860</accession>
<accession>D6VS87</accession>
<proteinExistence type="evidence at protein level"/>
<reference key="1">
    <citation type="journal article" date="1997" name="Nature">
        <title>The nucleotide sequence of Saccharomyces cerevisiae chromosome IV.</title>
        <authorList>
            <person name="Jacq C."/>
            <person name="Alt-Moerbe J."/>
            <person name="Andre B."/>
            <person name="Arnold W."/>
            <person name="Bahr A."/>
            <person name="Ballesta J.P.G."/>
            <person name="Bargues M."/>
            <person name="Baron L."/>
            <person name="Becker A."/>
            <person name="Biteau N."/>
            <person name="Bloecker H."/>
            <person name="Blugeon C."/>
            <person name="Boskovic J."/>
            <person name="Brandt P."/>
            <person name="Brueckner M."/>
            <person name="Buitrago M.J."/>
            <person name="Coster F."/>
            <person name="Delaveau T."/>
            <person name="del Rey F."/>
            <person name="Dujon B."/>
            <person name="Eide L.G."/>
            <person name="Garcia-Cantalejo J.M."/>
            <person name="Goffeau A."/>
            <person name="Gomez-Peris A."/>
            <person name="Granotier C."/>
            <person name="Hanemann V."/>
            <person name="Hankeln T."/>
            <person name="Hoheisel J.D."/>
            <person name="Jaeger W."/>
            <person name="Jimenez A."/>
            <person name="Jonniaux J.-L."/>
            <person name="Kraemer C."/>
            <person name="Kuester H."/>
            <person name="Laamanen P."/>
            <person name="Legros Y."/>
            <person name="Louis E.J."/>
            <person name="Moeller-Rieker S."/>
            <person name="Monnet A."/>
            <person name="Moro M."/>
            <person name="Mueller-Auer S."/>
            <person name="Nussbaumer B."/>
            <person name="Paricio N."/>
            <person name="Paulin L."/>
            <person name="Perea J."/>
            <person name="Perez-Alonso M."/>
            <person name="Perez-Ortin J.E."/>
            <person name="Pohl T.M."/>
            <person name="Prydz H."/>
            <person name="Purnelle B."/>
            <person name="Rasmussen S.W."/>
            <person name="Remacha M.A."/>
            <person name="Revuelta J.L."/>
            <person name="Rieger M."/>
            <person name="Salom D."/>
            <person name="Saluz H.P."/>
            <person name="Saiz J.E."/>
            <person name="Saren A.-M."/>
            <person name="Schaefer M."/>
            <person name="Scharfe M."/>
            <person name="Schmidt E.R."/>
            <person name="Schneider C."/>
            <person name="Scholler P."/>
            <person name="Schwarz S."/>
            <person name="Soler-Mira A."/>
            <person name="Urrestarazu L.A."/>
            <person name="Verhasselt P."/>
            <person name="Vissers S."/>
            <person name="Voet M."/>
            <person name="Volckaert G."/>
            <person name="Wagner G."/>
            <person name="Wambutt R."/>
            <person name="Wedler E."/>
            <person name="Wedler H."/>
            <person name="Woelfl S."/>
            <person name="Harris D.E."/>
            <person name="Bowman S."/>
            <person name="Brown D."/>
            <person name="Churcher C.M."/>
            <person name="Connor R."/>
            <person name="Dedman K."/>
            <person name="Gentles S."/>
            <person name="Hamlin N."/>
            <person name="Hunt S."/>
            <person name="Jones L."/>
            <person name="McDonald S."/>
            <person name="Murphy L.D."/>
            <person name="Niblett D."/>
            <person name="Odell C."/>
            <person name="Oliver K."/>
            <person name="Rajandream M.A."/>
            <person name="Richards C."/>
            <person name="Shore L."/>
            <person name="Walsh S.V."/>
            <person name="Barrell B.G."/>
            <person name="Dietrich F.S."/>
            <person name="Mulligan J.T."/>
            <person name="Allen E."/>
            <person name="Araujo R."/>
            <person name="Aviles E."/>
            <person name="Berno A."/>
            <person name="Carpenter J."/>
            <person name="Chen E."/>
            <person name="Cherry J.M."/>
            <person name="Chung E."/>
            <person name="Duncan M."/>
            <person name="Hunicke-Smith S."/>
            <person name="Hyman R.W."/>
            <person name="Komp C."/>
            <person name="Lashkari D."/>
            <person name="Lew H."/>
            <person name="Lin D."/>
            <person name="Mosedale D."/>
            <person name="Nakahara K."/>
            <person name="Namath A."/>
            <person name="Oefner P."/>
            <person name="Oh C."/>
            <person name="Petel F.X."/>
            <person name="Roberts D."/>
            <person name="Schramm S."/>
            <person name="Schroeder M."/>
            <person name="Shogren T."/>
            <person name="Shroff N."/>
            <person name="Winant A."/>
            <person name="Yelton M.A."/>
            <person name="Botstein D."/>
            <person name="Davis R.W."/>
            <person name="Johnston M."/>
            <person name="Andrews S."/>
            <person name="Brinkman R."/>
            <person name="Cooper J."/>
            <person name="Ding H."/>
            <person name="Du Z."/>
            <person name="Favello A."/>
            <person name="Fulton L."/>
            <person name="Gattung S."/>
            <person name="Greco T."/>
            <person name="Hallsworth K."/>
            <person name="Hawkins J."/>
            <person name="Hillier L.W."/>
            <person name="Jier M."/>
            <person name="Johnson D."/>
            <person name="Johnston L."/>
            <person name="Kirsten J."/>
            <person name="Kucaba T."/>
            <person name="Langston Y."/>
            <person name="Latreille P."/>
            <person name="Le T."/>
            <person name="Mardis E."/>
            <person name="Menezes S."/>
            <person name="Miller N."/>
            <person name="Nhan M."/>
            <person name="Pauley A."/>
            <person name="Peluso D."/>
            <person name="Rifkin L."/>
            <person name="Riles L."/>
            <person name="Taich A."/>
            <person name="Trevaskis E."/>
            <person name="Vignati D."/>
            <person name="Wilcox L."/>
            <person name="Wohldman P."/>
            <person name="Vaudin M."/>
            <person name="Wilson R."/>
            <person name="Waterston R."/>
            <person name="Albermann K."/>
            <person name="Hani J."/>
            <person name="Heumann K."/>
            <person name="Kleine K."/>
            <person name="Mewes H.-W."/>
            <person name="Zollner A."/>
            <person name="Zaccaria P."/>
        </authorList>
    </citation>
    <scope>NUCLEOTIDE SEQUENCE [LARGE SCALE GENOMIC DNA]</scope>
    <source>
        <strain>ATCC 204508 / S288c</strain>
    </source>
</reference>
<reference key="2">
    <citation type="journal article" date="2014" name="G3 (Bethesda)">
        <title>The reference genome sequence of Saccharomyces cerevisiae: Then and now.</title>
        <authorList>
            <person name="Engel S.R."/>
            <person name="Dietrich F.S."/>
            <person name="Fisk D.G."/>
            <person name="Binkley G."/>
            <person name="Balakrishnan R."/>
            <person name="Costanzo M.C."/>
            <person name="Dwight S.S."/>
            <person name="Hitz B.C."/>
            <person name="Karra K."/>
            <person name="Nash R.S."/>
            <person name="Weng S."/>
            <person name="Wong E.D."/>
            <person name="Lloyd P."/>
            <person name="Skrzypek M.S."/>
            <person name="Miyasato S.R."/>
            <person name="Simison M."/>
            <person name="Cherry J.M."/>
        </authorList>
    </citation>
    <scope>GENOME REANNOTATION</scope>
    <source>
        <strain>ATCC 204508 / S288c</strain>
    </source>
</reference>
<reference key="3">
    <citation type="journal article" date="2007" name="Genome Res.">
        <title>Approaching a complete repository of sequence-verified protein-encoding clones for Saccharomyces cerevisiae.</title>
        <authorList>
            <person name="Hu Y."/>
            <person name="Rolfs A."/>
            <person name="Bhullar B."/>
            <person name="Murthy T.V.S."/>
            <person name="Zhu C."/>
            <person name="Berger M.F."/>
            <person name="Camargo A.A."/>
            <person name="Kelley F."/>
            <person name="McCarron S."/>
            <person name="Jepson D."/>
            <person name="Richardson A."/>
            <person name="Raphael J."/>
            <person name="Moreira D."/>
            <person name="Taycher E."/>
            <person name="Zuo D."/>
            <person name="Mohr S."/>
            <person name="Kane M.F."/>
            <person name="Williamson J."/>
            <person name="Simpson A.J.G."/>
            <person name="Bulyk M.L."/>
            <person name="Harlow E."/>
            <person name="Marsischky G."/>
            <person name="Kolodner R.D."/>
            <person name="LaBaer J."/>
        </authorList>
    </citation>
    <scope>NUCLEOTIDE SEQUENCE [GENOMIC DNA]</scope>
    <source>
        <strain>ATCC 204508 / S288c</strain>
    </source>
</reference>
<reference key="4">
    <citation type="journal article" date="2003" name="Nature">
        <title>Global analysis of protein localization in budding yeast.</title>
        <authorList>
            <person name="Huh W.-K."/>
            <person name="Falvo J.V."/>
            <person name="Gerke L.C."/>
            <person name="Carroll A.S."/>
            <person name="Howson R.W."/>
            <person name="Weissman J.S."/>
            <person name="O'Shea E.K."/>
        </authorList>
    </citation>
    <scope>SUBCELLULAR LOCATION [LARGE SCALE ANALYSIS]</scope>
</reference>
<reference key="5">
    <citation type="journal article" date="2003" name="Nature">
        <title>Global analysis of protein expression in yeast.</title>
        <authorList>
            <person name="Ghaemmaghami S."/>
            <person name="Huh W.-K."/>
            <person name="Bower K."/>
            <person name="Howson R.W."/>
            <person name="Belle A."/>
            <person name="Dephoure N."/>
            <person name="O'Shea E.K."/>
            <person name="Weissman J.S."/>
        </authorList>
    </citation>
    <scope>LEVEL OF PROTEIN EXPRESSION [LARGE SCALE ANALYSIS]</scope>
</reference>
<reference key="6">
    <citation type="journal article" date="2005" name="Mol. Cell. Biol.">
        <title>Immunoisolation of the yeast Golgi subcompartments and characterization of a novel membrane protein, Svp26, discovered in the Sed5-containing compartments.</title>
        <authorList>
            <person name="Inadome H."/>
            <person name="Noda Y."/>
            <person name="Adachi H."/>
            <person name="Yoda K."/>
        </authorList>
    </citation>
    <scope>SUBCELLULAR LOCATION</scope>
</reference>
<reference key="7">
    <citation type="journal article" date="2006" name="Proc. Natl. Acad. Sci. U.S.A.">
        <title>A global topology map of the Saccharomyces cerevisiae membrane proteome.</title>
        <authorList>
            <person name="Kim H."/>
            <person name="Melen K."/>
            <person name="Oesterberg M."/>
            <person name="von Heijne G."/>
        </authorList>
    </citation>
    <scope>TOPOLOGY [LARGE SCALE ANALYSIS]</scope>
    <source>
        <strain>ATCC 208353 / W303-1A</strain>
    </source>
</reference>
<reference key="8">
    <citation type="journal article" date="2007" name="Exp. Cell Res.">
        <title>Tvp38, Tvp23, Tvp18 and Tvp15: novel membrane proteins in the Tlg2-containing Golgi/endosome compartments of Saccharomyces cerevisiae.</title>
        <authorList>
            <person name="Inadome H."/>
            <person name="Noda Y."/>
            <person name="Kamimura Y."/>
            <person name="Adachi H."/>
            <person name="Yoda K."/>
        </authorList>
    </citation>
    <scope>FUNCTION</scope>
    <scope>SUBCELLULAR LOCATION</scope>
    <scope>INTERACTION WITH TVP18</scope>
</reference>
<organism>
    <name type="scientific">Saccharomyces cerevisiae (strain ATCC 204508 / S288c)</name>
    <name type="common">Baker's yeast</name>
    <dbReference type="NCBI Taxonomy" id="559292"/>
    <lineage>
        <taxon>Eukaryota</taxon>
        <taxon>Fungi</taxon>
        <taxon>Dikarya</taxon>
        <taxon>Ascomycota</taxon>
        <taxon>Saccharomycotina</taxon>
        <taxon>Saccharomycetes</taxon>
        <taxon>Saccharomycetales</taxon>
        <taxon>Saccharomycetaceae</taxon>
        <taxon>Saccharomyces</taxon>
    </lineage>
</organism>
<gene>
    <name type="primary">TVP15</name>
    <name type="ordered locus">YDR100W</name>
</gene>
<name>TVP15_YEAST</name>
<evidence type="ECO:0000255" key="1"/>
<evidence type="ECO:0000269" key="2">
    <source>
    </source>
</evidence>
<evidence type="ECO:0000269" key="3">
    <source>
    </source>
</evidence>
<evidence type="ECO:0000269" key="4">
    <source>
    </source>
</evidence>
<evidence type="ECO:0000269" key="5">
    <source>
    </source>
</evidence>
<evidence type="ECO:0000305" key="6"/>
<protein>
    <recommendedName>
        <fullName>Golgi apparatus membrane protein TVP15</fullName>
    </recommendedName>
    <alternativeName>
        <fullName>TLG2 compartment vesicle protein 15</fullName>
    </alternativeName>
    <alternativeName>
        <fullName>TLG2-vesicle protein of 15 kDa</fullName>
    </alternativeName>
</protein>